<accession>P15363</accession>
<evidence type="ECO:0000255" key="1">
    <source>
        <dbReference type="PROSITE-ProRule" id="PRU00303"/>
    </source>
</evidence>
<evidence type="ECO:0000269" key="2">
    <source>
    </source>
</evidence>
<evidence type="ECO:0000305" key="3"/>
<evidence type="ECO:0007829" key="4">
    <source>
        <dbReference type="PDB" id="3E78"/>
    </source>
</evidence>
<evidence type="ECO:0007829" key="5">
    <source>
        <dbReference type="PDB" id="3E79"/>
    </source>
</evidence>
<evidence type="ECO:0007829" key="6">
    <source>
        <dbReference type="PDB" id="3EKI"/>
    </source>
</evidence>
<dbReference type="EMBL" id="X14140">
    <property type="protein sequence ID" value="CAA32357.1"/>
    <property type="molecule type" value="Genomic_DNA"/>
</dbReference>
<dbReference type="EMBL" id="M37339">
    <property type="protein sequence ID" value="AAA25427.1"/>
    <property type="molecule type" value="Genomic_DNA"/>
</dbReference>
<dbReference type="PIR" id="S01828">
    <property type="entry name" value="S01828"/>
</dbReference>
<dbReference type="PDB" id="3E78">
    <property type="method" value="X-ray"/>
    <property type="resolution" value="1.90 A"/>
    <property type="chains" value="A=1-403"/>
</dbReference>
<dbReference type="PDB" id="3E79">
    <property type="method" value="X-ray"/>
    <property type="resolution" value="1.90 A"/>
    <property type="chains" value="A=1-403"/>
</dbReference>
<dbReference type="PDB" id="3EKI">
    <property type="method" value="X-ray"/>
    <property type="resolution" value="1.60 A"/>
    <property type="chains" value="A=1-403"/>
</dbReference>
<dbReference type="PDBsum" id="3E78"/>
<dbReference type="PDBsum" id="3E79"/>
<dbReference type="PDBsum" id="3EKI"/>
<dbReference type="SMR" id="P15363"/>
<dbReference type="IntAct" id="P15363">
    <property type="interactions" value="2"/>
</dbReference>
<dbReference type="EvolutionaryTrace" id="P15363"/>
<dbReference type="GO" id="GO:0030430">
    <property type="term" value="C:host cell cytoplasm"/>
    <property type="evidence" value="ECO:0000314"/>
    <property type="project" value="AgBase"/>
</dbReference>
<dbReference type="GO" id="GO:0005886">
    <property type="term" value="C:plasma membrane"/>
    <property type="evidence" value="ECO:0007669"/>
    <property type="project" value="UniProtKB-SubCell"/>
</dbReference>
<dbReference type="GO" id="GO:0030334">
    <property type="term" value="P:regulation of cell migration"/>
    <property type="evidence" value="ECO:0000314"/>
    <property type="project" value="AgBase"/>
</dbReference>
<dbReference type="GO" id="GO:0001932">
    <property type="term" value="P:regulation of protein phosphorylation"/>
    <property type="evidence" value="ECO:0000314"/>
    <property type="project" value="AgBase"/>
</dbReference>
<dbReference type="FunFam" id="3.40.190.190:FF:000001">
    <property type="entry name" value="High affinity transport system protein"/>
    <property type="match status" value="1"/>
</dbReference>
<dbReference type="Gene3D" id="3.40.190.190">
    <property type="entry name" value="CypI, domain 2"/>
    <property type="match status" value="1"/>
</dbReference>
<dbReference type="Gene3D" id="3.40.190.180">
    <property type="entry name" value="Cypl, domain I"/>
    <property type="match status" value="1"/>
</dbReference>
<dbReference type="InterPro" id="IPR010592">
    <property type="entry name" value="CypI"/>
</dbReference>
<dbReference type="InterPro" id="IPR043099">
    <property type="entry name" value="CypI_dom_I"/>
</dbReference>
<dbReference type="InterPro" id="IPR043100">
    <property type="entry name" value="CypI_dom_II"/>
</dbReference>
<dbReference type="NCBIfam" id="NF045838">
    <property type="entry name" value="MG289_thiam_LP"/>
    <property type="match status" value="1"/>
</dbReference>
<dbReference type="Pfam" id="PF06646">
    <property type="entry name" value="CypI"/>
    <property type="match status" value="1"/>
</dbReference>
<dbReference type="PIRSF" id="PIRSF004523">
    <property type="entry name" value="Mycoplasma_p37"/>
    <property type="match status" value="1"/>
</dbReference>
<dbReference type="PROSITE" id="PS51257">
    <property type="entry name" value="PROKAR_LIPOPROTEIN"/>
    <property type="match status" value="1"/>
</dbReference>
<protein>
    <recommendedName>
        <fullName>High affinity transport system protein p37</fullName>
    </recommendedName>
</protein>
<reference key="1">
    <citation type="journal article" date="1988" name="EMBO J.">
        <title>A mycoplasma high-affinity transport system and the in vitro invasiveness of mouse sarcoma cells.</title>
        <authorList>
            <person name="Dudler R."/>
            <person name="Schmidhauser C."/>
            <person name="Parish R.W."/>
            <person name="Wettenhall R.E.H."/>
            <person name="Schmidt T."/>
        </authorList>
    </citation>
    <scope>NUCLEOTIDE SEQUENCE [GENOMIC DNA]</scope>
    <scope>PROTEIN SEQUENCE OF 24-50</scope>
</reference>
<comment type="function">
    <text>P37 is part of a high-affinity transport system.</text>
</comment>
<comment type="interaction">
    <interactant intactId="EBI-12740262">
        <id>P15363</id>
    </interactant>
    <interactant intactId="EBI-352622">
        <id>P07355</id>
        <label>ANXA2</label>
    </interactant>
    <organismsDiffer>true</organismsDiffer>
    <experiments>24</experiments>
</comment>
<comment type="subcellular location">
    <subcellularLocation>
        <location>Cell membrane</location>
        <topology>Lipid-anchor</topology>
    </subcellularLocation>
</comment>
<organism>
    <name type="scientific">Mesomycoplasma hyorhinis</name>
    <name type="common">Mycoplasma hyorhinis</name>
    <dbReference type="NCBI Taxonomy" id="2100"/>
    <lineage>
        <taxon>Bacteria</taxon>
        <taxon>Bacillati</taxon>
        <taxon>Mycoplasmatota</taxon>
        <taxon>Mycoplasmoidales</taxon>
        <taxon>Metamycoplasmataceae</taxon>
        <taxon>Mesomycoplasma</taxon>
    </lineage>
</organism>
<feature type="signal peptide" evidence="1 2">
    <location>
        <begin position="1"/>
        <end position="23"/>
    </location>
</feature>
<feature type="chain" id="PRO_0000018095" description="High affinity transport system protein p37">
    <location>
        <begin position="24"/>
        <end position="403"/>
    </location>
</feature>
<feature type="lipid moiety-binding region" description="N-palmitoyl cysteine" evidence="3">
    <location>
        <position position="24"/>
    </location>
</feature>
<feature type="lipid moiety-binding region" description="S-diacylglycerol cysteine" evidence="3">
    <location>
        <position position="24"/>
    </location>
</feature>
<feature type="strand" evidence="6">
    <location>
        <begin position="44"/>
        <end position="51"/>
    </location>
</feature>
<feature type="helix" evidence="6">
    <location>
        <begin position="52"/>
        <end position="55"/>
    </location>
</feature>
<feature type="strand" evidence="5">
    <location>
        <begin position="59"/>
        <end position="62"/>
    </location>
</feature>
<feature type="helix" evidence="6">
    <location>
        <begin position="64"/>
        <end position="85"/>
    </location>
</feature>
<feature type="turn" evidence="6">
    <location>
        <begin position="88"/>
        <end position="92"/>
    </location>
</feature>
<feature type="strand" evidence="6">
    <location>
        <begin position="97"/>
        <end position="104"/>
    </location>
</feature>
<feature type="helix" evidence="6">
    <location>
        <begin position="106"/>
        <end position="114"/>
    </location>
</feature>
<feature type="strand" evidence="6">
    <location>
        <begin position="122"/>
        <end position="125"/>
    </location>
</feature>
<feature type="helix" evidence="6">
    <location>
        <begin position="127"/>
        <end position="136"/>
    </location>
</feature>
<feature type="strand" evidence="6">
    <location>
        <begin position="140"/>
        <end position="152"/>
    </location>
</feature>
<feature type="helix" evidence="6">
    <location>
        <begin position="170"/>
        <end position="182"/>
    </location>
</feature>
<feature type="turn" evidence="6">
    <location>
        <begin position="183"/>
        <end position="186"/>
    </location>
</feature>
<feature type="helix" evidence="6">
    <location>
        <begin position="187"/>
        <end position="189"/>
    </location>
</feature>
<feature type="turn" evidence="6">
    <location>
        <begin position="192"/>
        <end position="196"/>
    </location>
</feature>
<feature type="helix" evidence="6">
    <location>
        <begin position="203"/>
        <end position="205"/>
    </location>
</feature>
<feature type="strand" evidence="6">
    <location>
        <begin position="206"/>
        <end position="213"/>
    </location>
</feature>
<feature type="strand" evidence="6">
    <location>
        <begin position="217"/>
        <end position="223"/>
    </location>
</feature>
<feature type="helix" evidence="6">
    <location>
        <begin position="225"/>
        <end position="236"/>
    </location>
</feature>
<feature type="helix" evidence="6">
    <location>
        <begin position="240"/>
        <end position="245"/>
    </location>
</feature>
<feature type="strand" evidence="6">
    <location>
        <begin position="248"/>
        <end position="250"/>
    </location>
</feature>
<feature type="turn" evidence="6">
    <location>
        <begin position="256"/>
        <end position="259"/>
    </location>
</feature>
<feature type="helix" evidence="6">
    <location>
        <begin position="260"/>
        <end position="269"/>
    </location>
</feature>
<feature type="turn" evidence="4">
    <location>
        <begin position="270"/>
        <end position="272"/>
    </location>
</feature>
<feature type="helix" evidence="6">
    <location>
        <begin position="277"/>
        <end position="283"/>
    </location>
</feature>
<feature type="helix" evidence="6">
    <location>
        <begin position="285"/>
        <end position="287"/>
    </location>
</feature>
<feature type="strand" evidence="6">
    <location>
        <begin position="288"/>
        <end position="290"/>
    </location>
</feature>
<feature type="helix" evidence="6">
    <location>
        <begin position="293"/>
        <end position="298"/>
    </location>
</feature>
<feature type="strand" evidence="6">
    <location>
        <begin position="304"/>
        <end position="308"/>
    </location>
</feature>
<feature type="helix" evidence="6">
    <location>
        <begin position="311"/>
        <end position="314"/>
    </location>
</feature>
<feature type="strand" evidence="6">
    <location>
        <begin position="331"/>
        <end position="337"/>
    </location>
</feature>
<feature type="strand" evidence="6">
    <location>
        <begin position="345"/>
        <end position="349"/>
    </location>
</feature>
<feature type="helix" evidence="6">
    <location>
        <begin position="354"/>
        <end position="369"/>
    </location>
</feature>
<feature type="helix" evidence="6">
    <location>
        <begin position="376"/>
        <end position="379"/>
    </location>
</feature>
<feature type="strand" evidence="6">
    <location>
        <begin position="383"/>
        <end position="386"/>
    </location>
</feature>
<feature type="helix" evidence="6">
    <location>
        <begin position="390"/>
        <end position="393"/>
    </location>
</feature>
<feature type="helix" evidence="6">
    <location>
        <begin position="395"/>
        <end position="402"/>
    </location>
</feature>
<gene>
    <name type="primary">p37</name>
</gene>
<keyword id="KW-0002">3D-structure</keyword>
<keyword id="KW-1003">Cell membrane</keyword>
<keyword id="KW-0903">Direct protein sequencing</keyword>
<keyword id="KW-0449">Lipoprotein</keyword>
<keyword id="KW-0472">Membrane</keyword>
<keyword id="KW-0564">Palmitate</keyword>
<keyword id="KW-0732">Signal</keyword>
<keyword id="KW-0813">Transport</keyword>
<name>P37_MESHY</name>
<proteinExistence type="evidence at protein level"/>
<sequence length="403" mass="46118">MLKKLKNFILFSSIFSPIAFAISCSNTGVVKQEDVSVSQGQWDKSITFGVSEAWLNKKKGGEKVNKEVINTFLENFKKEFNKLKNANDKTKNFDDVDFKVTPIQDFTVLLNNLSTDNPELDFGINASGKLVEFLKNNPGIITPALETTTNSFVFDKEKDKFYVDGTDSDPLVKIAKEINKIFVETPYASWTDENHKWNGNVYQSVYDPTVQANFYRGMIWIKGNDETLAKIKKAWNDKDWNTFRNFGILHGKDNSFSKFKLEETILKNHFQNKFTTLNEDRSAHPNAYKQKSADTLGTLDDFHIAFSEEGSFAWTHNKSATKPFETKANEKMEALIVTNPIPYDVGVFRKSVNQLEQNLIVQTFINLAKNKQDTYGPLLGYNGYKKIDNFQKEIVEVYEKAIK</sequence>